<accession>Q9EPB8</accession>
<protein>
    <recommendedName>
        <fullName>Vomeronasal type-1 receptor 54</fullName>
    </recommendedName>
    <alternativeName>
        <fullName>Pheromone receptor VN7</fullName>
    </alternativeName>
    <alternativeName>
        <fullName>Vomeronasal receptor 7</fullName>
    </alternativeName>
    <alternativeName>
        <fullName>Vomeronasal type-1 receptor A9</fullName>
    </alternativeName>
</protein>
<name>V1R54_MOUSE</name>
<keyword id="KW-1003">Cell membrane</keyword>
<keyword id="KW-1015">Disulfide bond</keyword>
<keyword id="KW-0297">G-protein coupled receptor</keyword>
<keyword id="KW-0472">Membrane</keyword>
<keyword id="KW-0589">Pheromone response</keyword>
<keyword id="KW-0675">Receptor</keyword>
<keyword id="KW-1185">Reference proteome</keyword>
<keyword id="KW-0807">Transducer</keyword>
<keyword id="KW-0812">Transmembrane</keyword>
<keyword id="KW-1133">Transmembrane helix</keyword>
<reference evidence="5" key="1">
    <citation type="journal article" date="2000" name="Genome Res.">
        <title>Sequence diversity and genomic organization of vomeronasal receptor genes in the mouse.</title>
        <authorList>
            <person name="Del Punta K."/>
            <person name="Rothman A."/>
            <person name="Rodriguez I."/>
            <person name="Mombaerts P."/>
        </authorList>
    </citation>
    <scope>NUCLEOTIDE SEQUENCE [GENOMIC DNA]</scope>
    <source>
        <strain evidence="5">129/SvJ</strain>
    </source>
</reference>
<reference evidence="6" key="2">
    <citation type="journal article" date="2002" name="Proc. Natl. Acad. Sci. U.S.A.">
        <title>Sequence analysis of mouse vomeronasal receptor gene clusters reveals common promoter motifs and a history of recent expansion.</title>
        <authorList>
            <person name="Lane R.P."/>
            <person name="Cutforth T."/>
            <person name="Axel R."/>
            <person name="Hood L."/>
            <person name="Trask B.J."/>
        </authorList>
    </citation>
    <scope>NUCLEOTIDE SEQUENCE [GENOMIC DNA]</scope>
</reference>
<reference evidence="4" key="3">
    <citation type="journal article" date="2002" name="Nature">
        <title>Deficient pheromone responses in mice lacking a cluster of vomeronasal receptor genes.</title>
        <authorList>
            <person name="Del Punta K."/>
            <person name="Leinders-Zufall T."/>
            <person name="Rodriguez I."/>
            <person name="Jukam D."/>
            <person name="Wysocki C.J."/>
            <person name="Ogawa S."/>
            <person name="Zufall F."/>
            <person name="Mombaerts P."/>
        </authorList>
    </citation>
    <scope>PUTATIVE FUNCTION</scope>
    <scope>DISRUPTION PHENOTYPE</scope>
</reference>
<gene>
    <name type="primary">Vmn1r54</name>
    <name type="synonym">V1ra9</name>
</gene>
<comment type="function">
    <text evidence="3">Putative pheromone receptor implicated in the regulation of social and reproductive behavior.</text>
</comment>
<comment type="subcellular location">
    <subcellularLocation>
        <location evidence="4">Cell membrane</location>
        <topology evidence="1">Multi-pass membrane protein</topology>
    </subcellularLocation>
</comment>
<comment type="disruption phenotype">
    <text evidence="3">Mice lacking all but one V1ra and V1rb gene (12% of the V1r repertoire) show a lack of chemosensory response to a subset of known pheromonal ligands and changes in maternal aggression as well as male reproductive behavior.</text>
</comment>
<comment type="similarity">
    <text evidence="2">Belongs to the G-protein coupled receptor 1 family.</text>
</comment>
<organism>
    <name type="scientific">Mus musculus</name>
    <name type="common">Mouse</name>
    <dbReference type="NCBI Taxonomy" id="10090"/>
    <lineage>
        <taxon>Eukaryota</taxon>
        <taxon>Metazoa</taxon>
        <taxon>Chordata</taxon>
        <taxon>Craniata</taxon>
        <taxon>Vertebrata</taxon>
        <taxon>Euteleostomi</taxon>
        <taxon>Mammalia</taxon>
        <taxon>Eutheria</taxon>
        <taxon>Euarchontoglires</taxon>
        <taxon>Glires</taxon>
        <taxon>Rodentia</taxon>
        <taxon>Myomorpha</taxon>
        <taxon>Muroidea</taxon>
        <taxon>Muridae</taxon>
        <taxon>Murinae</taxon>
        <taxon>Mus</taxon>
        <taxon>Mus</taxon>
    </lineage>
</organism>
<feature type="chain" id="PRO_0000239966" description="Vomeronasal type-1 receptor 54">
    <location>
        <begin position="1"/>
        <end position="315"/>
    </location>
</feature>
<feature type="topological domain" description="Extracellular" evidence="1">
    <location>
        <begin position="1"/>
        <end position="15"/>
    </location>
</feature>
<feature type="transmembrane region" description="Helical; Name=1" evidence="1">
    <location>
        <begin position="16"/>
        <end position="40"/>
    </location>
</feature>
<feature type="topological domain" description="Cytoplasmic" evidence="1">
    <location>
        <begin position="41"/>
        <end position="51"/>
    </location>
</feature>
<feature type="transmembrane region" description="Helical; Name=2" evidence="1">
    <location>
        <begin position="52"/>
        <end position="71"/>
    </location>
</feature>
<feature type="topological domain" description="Extracellular" evidence="1">
    <location>
        <begin position="72"/>
        <end position="90"/>
    </location>
</feature>
<feature type="transmembrane region" description="Helical; Name=3" evidence="1">
    <location>
        <begin position="91"/>
        <end position="112"/>
    </location>
</feature>
<feature type="topological domain" description="Cytoplasmic" evidence="1">
    <location>
        <begin position="113"/>
        <end position="132"/>
    </location>
</feature>
<feature type="transmembrane region" description="Helical; Name=4" evidence="1">
    <location>
        <begin position="133"/>
        <end position="154"/>
    </location>
</feature>
<feature type="topological domain" description="Extracellular" evidence="1">
    <location>
        <begin position="155"/>
        <end position="193"/>
    </location>
</feature>
<feature type="transmembrane region" description="Helical; Name=5" evidence="1">
    <location>
        <begin position="194"/>
        <end position="212"/>
    </location>
</feature>
<feature type="topological domain" description="Cytoplasmic" evidence="1">
    <location>
        <begin position="213"/>
        <end position="239"/>
    </location>
</feature>
<feature type="transmembrane region" description="Helical; Name=6" evidence="1">
    <location>
        <begin position="240"/>
        <end position="260"/>
    </location>
</feature>
<feature type="topological domain" description="Extracellular" evidence="1">
    <location>
        <begin position="261"/>
        <end position="267"/>
    </location>
</feature>
<feature type="transmembrane region" description="Helical; Name=7" evidence="1">
    <location>
        <begin position="268"/>
        <end position="288"/>
    </location>
</feature>
<feature type="topological domain" description="Cytoplasmic" evidence="1">
    <location>
        <begin position="289"/>
        <end position="315"/>
    </location>
</feature>
<feature type="disulfide bond" evidence="2">
    <location>
        <begin position="85"/>
        <end position="172"/>
    </location>
</feature>
<sequence length="315" mass="35854">MNKMNRLSHNTEIRNAIYSGVGIGISGNSFLLLFHIFKYIRGQRSRHIDLPIGLLSLIHLVMLIAMSLVATDIFMPWGRWGDTTCKCVISLYRFCRSLSLCATSLLSILQAVTLNPRNSCLEKFKRKSPHYMLGCLLFLSVFYTFISSPLATYITAKSNLTSPSFTYITTSCSLAPMSYSFHLTVFILLTSRDVIFVGLMLLSSGYMVTFLGRHKKQSQFLHITSFSLKPSAEKRAMRTILCLMSFFVLMYTLDSIVSYIRSIDDGQIFYCVHIFTAHGYATVSPFLILSTEKYIINIFRSTFGRMVTIILLRNR</sequence>
<evidence type="ECO:0000255" key="1"/>
<evidence type="ECO:0000255" key="2">
    <source>
        <dbReference type="PROSITE-ProRule" id="PRU00521"/>
    </source>
</evidence>
<evidence type="ECO:0000269" key="3">
    <source>
    </source>
</evidence>
<evidence type="ECO:0000305" key="4"/>
<evidence type="ECO:0000312" key="5">
    <source>
        <dbReference type="EMBL" id="AAG42082.1"/>
    </source>
</evidence>
<evidence type="ECO:0000312" key="6">
    <source>
        <dbReference type="EMBL" id="AAG43252.1"/>
    </source>
</evidence>
<proteinExistence type="inferred from homology"/>
<dbReference type="EMBL" id="AF291488">
    <property type="protein sequence ID" value="AAG42082.1"/>
    <property type="molecule type" value="Genomic_DNA"/>
</dbReference>
<dbReference type="EMBL" id="AF129005">
    <property type="protein sequence ID" value="AAG43252.1"/>
    <property type="molecule type" value="Genomic_DNA"/>
</dbReference>
<dbReference type="CCDS" id="CCDS20356.1"/>
<dbReference type="RefSeq" id="NP_444454.1">
    <property type="nucleotide sequence ID" value="NM_053224.1"/>
</dbReference>
<dbReference type="SMR" id="Q9EPB8"/>
<dbReference type="STRING" id="10090.ENSMUSP00000154354"/>
<dbReference type="PaxDb" id="10090-ENSMUSP00000063052"/>
<dbReference type="ProteomicsDB" id="298268"/>
<dbReference type="DNASU" id="113851"/>
<dbReference type="Ensembl" id="ENSMUST00000058039.3">
    <property type="protein sequence ID" value="ENSMUSP00000063052.3"/>
    <property type="gene ID" value="ENSMUSG00000047203.4"/>
</dbReference>
<dbReference type="Ensembl" id="ENSMUST00000226921.2">
    <property type="protein sequence ID" value="ENSMUSP00000154354.2"/>
    <property type="gene ID" value="ENSMUSG00000047203.4"/>
</dbReference>
<dbReference type="GeneID" id="113851"/>
<dbReference type="KEGG" id="mmu:113851"/>
<dbReference type="UCSC" id="uc009cwz.1">
    <property type="organism name" value="mouse"/>
</dbReference>
<dbReference type="AGR" id="MGI:2148514"/>
<dbReference type="CTD" id="113851"/>
<dbReference type="MGI" id="MGI:2148514">
    <property type="gene designation" value="Vmn1r54"/>
</dbReference>
<dbReference type="VEuPathDB" id="HostDB:ENSMUSG00000047203"/>
<dbReference type="eggNOG" id="ENOG502SNRJ">
    <property type="taxonomic scope" value="Eukaryota"/>
</dbReference>
<dbReference type="GeneTree" id="ENSGT01030000234553"/>
<dbReference type="HOGENOM" id="CLU_058641_0_0_1"/>
<dbReference type="InParanoid" id="Q9EPB8"/>
<dbReference type="OMA" id="NDPDCHC"/>
<dbReference type="OrthoDB" id="9610163at2759"/>
<dbReference type="PhylomeDB" id="Q9EPB8"/>
<dbReference type="BioGRID-ORCS" id="113851">
    <property type="hits" value="3 hits in 72 CRISPR screens"/>
</dbReference>
<dbReference type="PRO" id="PR:Q9EPB8"/>
<dbReference type="Proteomes" id="UP000000589">
    <property type="component" value="Chromosome 6"/>
</dbReference>
<dbReference type="RNAct" id="Q9EPB8">
    <property type="molecule type" value="protein"/>
</dbReference>
<dbReference type="Bgee" id="ENSMUSG00000047203">
    <property type="expression patterns" value="Expressed in digastric muscle group and 1 other cell type or tissue"/>
</dbReference>
<dbReference type="GO" id="GO:0005886">
    <property type="term" value="C:plasma membrane"/>
    <property type="evidence" value="ECO:0007669"/>
    <property type="project" value="UniProtKB-SubCell"/>
</dbReference>
<dbReference type="GO" id="GO:0016503">
    <property type="term" value="F:pheromone receptor activity"/>
    <property type="evidence" value="ECO:0007669"/>
    <property type="project" value="InterPro"/>
</dbReference>
<dbReference type="GO" id="GO:0019236">
    <property type="term" value="P:response to pheromone"/>
    <property type="evidence" value="ECO:0007669"/>
    <property type="project" value="UniProtKB-KW"/>
</dbReference>
<dbReference type="GO" id="GO:0007606">
    <property type="term" value="P:sensory perception of chemical stimulus"/>
    <property type="evidence" value="ECO:0000304"/>
    <property type="project" value="MGI"/>
</dbReference>
<dbReference type="CDD" id="cd13949">
    <property type="entry name" value="7tm_V1R_pheromone"/>
    <property type="match status" value="1"/>
</dbReference>
<dbReference type="FunFam" id="1.20.1070.10:FF:000051">
    <property type="entry name" value="Vomeronasal type-1 receptor"/>
    <property type="match status" value="1"/>
</dbReference>
<dbReference type="Gene3D" id="1.20.1070.10">
    <property type="entry name" value="Rhodopsin 7-helix transmembrane proteins"/>
    <property type="match status" value="1"/>
</dbReference>
<dbReference type="InterPro" id="IPR017452">
    <property type="entry name" value="GPCR_Rhodpsn_7TM"/>
</dbReference>
<dbReference type="InterPro" id="IPR004072">
    <property type="entry name" value="Vmron_rcpt_1"/>
</dbReference>
<dbReference type="PANTHER" id="PTHR24062">
    <property type="entry name" value="VOMERONASAL TYPE-1 RECEPTOR"/>
    <property type="match status" value="1"/>
</dbReference>
<dbReference type="Pfam" id="PF03402">
    <property type="entry name" value="V1R"/>
    <property type="match status" value="1"/>
</dbReference>
<dbReference type="PRINTS" id="PR01534">
    <property type="entry name" value="VOMERONASL1R"/>
</dbReference>
<dbReference type="SUPFAM" id="SSF81321">
    <property type="entry name" value="Family A G protein-coupled receptor-like"/>
    <property type="match status" value="1"/>
</dbReference>
<dbReference type="PROSITE" id="PS50262">
    <property type="entry name" value="G_PROTEIN_RECEP_F1_2"/>
    <property type="match status" value="1"/>
</dbReference>